<dbReference type="EMBL" id="X92840">
    <property type="protein sequence ID" value="CAA63426.1"/>
    <property type="molecule type" value="mRNA"/>
</dbReference>
<dbReference type="EMBL" id="AE013599">
    <property type="protein sequence ID" value="AAF46975.1"/>
    <property type="molecule type" value="Genomic_DNA"/>
</dbReference>
<dbReference type="PIR" id="S66578">
    <property type="entry name" value="S66578"/>
</dbReference>
<dbReference type="RefSeq" id="NP_001286760.1">
    <property type="nucleotide sequence ID" value="NM_001299831.1"/>
</dbReference>
<dbReference type="RefSeq" id="NP_726303.1">
    <property type="nucleotide sequence ID" value="NM_166589.2"/>
</dbReference>
<dbReference type="BioGRID" id="63290">
    <property type="interactions" value="2"/>
</dbReference>
<dbReference type="FunCoup" id="Q24434">
    <property type="interactions" value="6"/>
</dbReference>
<dbReference type="IntAct" id="Q24434">
    <property type="interactions" value="1"/>
</dbReference>
<dbReference type="STRING" id="7227.FBpp0071956"/>
<dbReference type="PaxDb" id="7227-FBpp0071956"/>
<dbReference type="DNASU" id="37687"/>
<dbReference type="EnsemblMetazoa" id="FBtr0072047">
    <property type="protein sequence ID" value="FBpp0071956"/>
    <property type="gene ID" value="FBgn0003009"/>
</dbReference>
<dbReference type="EnsemblMetazoa" id="FBtr0343199">
    <property type="protein sequence ID" value="FBpp0309889"/>
    <property type="gene ID" value="FBgn0003009"/>
</dbReference>
<dbReference type="GeneID" id="37687"/>
<dbReference type="KEGG" id="dme:Dmel_CG3134"/>
<dbReference type="AGR" id="FB:FBgn0003009"/>
<dbReference type="CTD" id="37687"/>
<dbReference type="FlyBase" id="FBgn0003009">
    <property type="gene designation" value="ord"/>
</dbReference>
<dbReference type="VEuPathDB" id="VectorBase:FBgn0003009"/>
<dbReference type="eggNOG" id="ENOG502TD0Q">
    <property type="taxonomic scope" value="Eukaryota"/>
</dbReference>
<dbReference type="HOGENOM" id="CLU_566559_0_0_1"/>
<dbReference type="InParanoid" id="Q24434"/>
<dbReference type="OMA" id="WVCMRYL"/>
<dbReference type="OrthoDB" id="7972567at2759"/>
<dbReference type="PhylomeDB" id="Q24434"/>
<dbReference type="BioGRID-ORCS" id="37687">
    <property type="hits" value="0 hits in 1 CRISPR screen"/>
</dbReference>
<dbReference type="ChiTaRS" id="shf">
    <property type="organism name" value="fly"/>
</dbReference>
<dbReference type="GenomeRNAi" id="37687"/>
<dbReference type="PRO" id="PR:Q24434"/>
<dbReference type="Proteomes" id="UP000000803">
    <property type="component" value="Chromosome 2R"/>
</dbReference>
<dbReference type="Bgee" id="FBgn0003009">
    <property type="expression patterns" value="Expressed in spermatocyte in testis and 15 other cell types or tissues"/>
</dbReference>
<dbReference type="ExpressionAtlas" id="Q24434">
    <property type="expression patterns" value="baseline and differential"/>
</dbReference>
<dbReference type="GO" id="GO:0000785">
    <property type="term" value="C:chromatin"/>
    <property type="evidence" value="ECO:0000314"/>
    <property type="project" value="UniProtKB"/>
</dbReference>
<dbReference type="GO" id="GO:0000779">
    <property type="term" value="C:condensed chromosome, centromeric region"/>
    <property type="evidence" value="ECO:0000314"/>
    <property type="project" value="UniProtKB"/>
</dbReference>
<dbReference type="GO" id="GO:0001674">
    <property type="term" value="C:female germ cell nucleus"/>
    <property type="evidence" value="ECO:0000314"/>
    <property type="project" value="UniProtKB"/>
</dbReference>
<dbReference type="GO" id="GO:0001673">
    <property type="term" value="C:male germ cell nucleus"/>
    <property type="evidence" value="ECO:0000314"/>
    <property type="project" value="UniProtKB"/>
</dbReference>
<dbReference type="GO" id="GO:0005635">
    <property type="term" value="C:nuclear envelope"/>
    <property type="evidence" value="ECO:0000314"/>
    <property type="project" value="UniProtKB"/>
</dbReference>
<dbReference type="GO" id="GO:0005634">
    <property type="term" value="C:nucleus"/>
    <property type="evidence" value="ECO:0000314"/>
    <property type="project" value="UniProtKB"/>
</dbReference>
<dbReference type="GO" id="GO:0007059">
    <property type="term" value="P:chromosome segregation"/>
    <property type="evidence" value="ECO:0000315"/>
    <property type="project" value="FlyBase"/>
</dbReference>
<dbReference type="GO" id="GO:0007066">
    <property type="term" value="P:female meiosis sister chromatid cohesion"/>
    <property type="evidence" value="ECO:0000314"/>
    <property type="project" value="UniProtKB"/>
</dbReference>
<dbReference type="GO" id="GO:0007276">
    <property type="term" value="P:gamete generation"/>
    <property type="evidence" value="ECO:0000315"/>
    <property type="project" value="FlyBase"/>
</dbReference>
<dbReference type="GO" id="GO:0051457">
    <property type="term" value="P:maintenance of protein location in nucleus"/>
    <property type="evidence" value="ECO:0000315"/>
    <property type="project" value="UniProtKB"/>
</dbReference>
<dbReference type="GO" id="GO:0007060">
    <property type="term" value="P:male meiosis chromosome segregation"/>
    <property type="evidence" value="ECO:0000315"/>
    <property type="project" value="FlyBase"/>
</dbReference>
<dbReference type="GO" id="GO:0007065">
    <property type="term" value="P:male meiosis sister chromatid cohesion"/>
    <property type="evidence" value="ECO:0000314"/>
    <property type="project" value="UniProtKB"/>
</dbReference>
<dbReference type="GO" id="GO:0051321">
    <property type="term" value="P:meiotic cell cycle"/>
    <property type="evidence" value="ECO:0000315"/>
    <property type="project" value="FlyBase"/>
</dbReference>
<dbReference type="GO" id="GO:0051177">
    <property type="term" value="P:meiotic sister chromatid cohesion"/>
    <property type="evidence" value="ECO:0000315"/>
    <property type="project" value="FlyBase"/>
</dbReference>
<dbReference type="GO" id="GO:0000278">
    <property type="term" value="P:mitotic cell cycle"/>
    <property type="evidence" value="ECO:0000315"/>
    <property type="project" value="FlyBase"/>
</dbReference>
<dbReference type="GO" id="GO:0007062">
    <property type="term" value="P:sister chromatid cohesion"/>
    <property type="evidence" value="ECO:0000315"/>
    <property type="project" value="FlyBase"/>
</dbReference>
<evidence type="ECO:0000256" key="1">
    <source>
        <dbReference type="SAM" id="MobiDB-lite"/>
    </source>
</evidence>
<evidence type="ECO:0000269" key="2">
    <source>
    </source>
</evidence>
<evidence type="ECO:0000305" key="3"/>
<comment type="function">
    <text>Essential for proper maintenance of sister-chromatid cohesion in both male and female meiosis. Mutations in ord cause premature separation of the sister chromatids in meiosis I and random segregation in both meiotic divisions. Required for chiasma maintenance in female meiosis. Mutations in ord reduce recombination in female meiosis.</text>
</comment>
<comment type="subunit">
    <text evidence="2">Interacts with Sce.</text>
</comment>
<comment type="subcellular location">
    <subcellularLocation>
        <location>Nucleus</location>
    </subcellularLocation>
    <subcellularLocation>
        <location>Chromosome</location>
    </subcellularLocation>
    <subcellularLocation>
        <location>Chromosome</location>
        <location>Centromere</location>
    </subcellularLocation>
    <text>In male meiosis it assembles onto chromosomes in late G2 of the meiotic cell cycle. It remains at the centromeres after chromosome condensation, through the meiosis I division until the separation of sister chromatids at anaphase II.</text>
</comment>
<sequence>MYGETTLNKNHVIKFIKLKINNCLGCDEVEINFSKADNVHIIIYSLVTDMAKDLPAVTPVAQAILLLCSLTYPDSDSLETIPQLKIGKGSVSMSFKVYPVNKEEETEPESESDLDEGPSTSKQALERMVQRAERKAKEASTRNVHSKGIYVNVERRFDMYFALDTVSYYINGGKRQSCPLPEFHAKFFVRPQHSINLLRQLHEKCSGNWLKVIQSDGDGDAFKKFKDPDSPFETFVKLFESNPIKPNDMMGKLAKTCLHVNEAVRLTEREFILEVFNQVRHIFEYITAQEYTVWFLVPCLGDKDQLRSKTLEDFDLTKVRTSIRRAGDTSNIWWDHTDHNIKDILLVAFQLDLATHVNQSVLVISHLETLAEFSTMQYVTAFFMNDFYAKKNTEPKWICHRYLERIIDVALFLGVIVIIEYPSAFTLLQEGRHLIKCFQKENADSSRTSQWEIFEDVVKENESDLEFLKEAVGKVQQNV</sequence>
<accession>Q24434</accession>
<accession>Q9W1S8</accession>
<organism>
    <name type="scientific">Drosophila melanogaster</name>
    <name type="common">Fruit fly</name>
    <dbReference type="NCBI Taxonomy" id="7227"/>
    <lineage>
        <taxon>Eukaryota</taxon>
        <taxon>Metazoa</taxon>
        <taxon>Ecdysozoa</taxon>
        <taxon>Arthropoda</taxon>
        <taxon>Hexapoda</taxon>
        <taxon>Insecta</taxon>
        <taxon>Pterygota</taxon>
        <taxon>Neoptera</taxon>
        <taxon>Endopterygota</taxon>
        <taxon>Diptera</taxon>
        <taxon>Brachycera</taxon>
        <taxon>Muscomorpha</taxon>
        <taxon>Ephydroidea</taxon>
        <taxon>Drosophilidae</taxon>
        <taxon>Drosophila</taxon>
        <taxon>Sophophora</taxon>
    </lineage>
</organism>
<gene>
    <name type="primary">ord</name>
    <name type="ORF">CG3134</name>
</gene>
<keyword id="KW-0137">Centromere</keyword>
<keyword id="KW-0158">Chromosome</keyword>
<keyword id="KW-0469">Meiosis</keyword>
<keyword id="KW-0539">Nucleus</keyword>
<keyword id="KW-1185">Reference proteome</keyword>
<reference key="1">
    <citation type="journal article" date="1996" name="EMBO J.">
        <title>Identification of ORD, a Drosophila protein essential for sister chromatid cohesion.</title>
        <authorList>
            <person name="Bickel S.E."/>
            <person name="Wyman D.W."/>
            <person name="Miyazaki W.Y."/>
            <person name="Moore D.P."/>
            <person name="Orr-Weaver T.L."/>
        </authorList>
    </citation>
    <scope>NUCLEOTIDE SEQUENCE [MRNA]</scope>
    <source>
        <tissue>Testis</tissue>
    </source>
</reference>
<reference key="2">
    <citation type="journal article" date="2000" name="Science">
        <title>The genome sequence of Drosophila melanogaster.</title>
        <authorList>
            <person name="Adams M.D."/>
            <person name="Celniker S.E."/>
            <person name="Holt R.A."/>
            <person name="Evans C.A."/>
            <person name="Gocayne J.D."/>
            <person name="Amanatides P.G."/>
            <person name="Scherer S.E."/>
            <person name="Li P.W."/>
            <person name="Hoskins R.A."/>
            <person name="Galle R.F."/>
            <person name="George R.A."/>
            <person name="Lewis S.E."/>
            <person name="Richards S."/>
            <person name="Ashburner M."/>
            <person name="Henderson S.N."/>
            <person name="Sutton G.G."/>
            <person name="Wortman J.R."/>
            <person name="Yandell M.D."/>
            <person name="Zhang Q."/>
            <person name="Chen L.X."/>
            <person name="Brandon R.C."/>
            <person name="Rogers Y.-H.C."/>
            <person name="Blazej R.G."/>
            <person name="Champe M."/>
            <person name="Pfeiffer B.D."/>
            <person name="Wan K.H."/>
            <person name="Doyle C."/>
            <person name="Baxter E.G."/>
            <person name="Helt G."/>
            <person name="Nelson C.R."/>
            <person name="Miklos G.L.G."/>
            <person name="Abril J.F."/>
            <person name="Agbayani A."/>
            <person name="An H.-J."/>
            <person name="Andrews-Pfannkoch C."/>
            <person name="Baldwin D."/>
            <person name="Ballew R.M."/>
            <person name="Basu A."/>
            <person name="Baxendale J."/>
            <person name="Bayraktaroglu L."/>
            <person name="Beasley E.M."/>
            <person name="Beeson K.Y."/>
            <person name="Benos P.V."/>
            <person name="Berman B.P."/>
            <person name="Bhandari D."/>
            <person name="Bolshakov S."/>
            <person name="Borkova D."/>
            <person name="Botchan M.R."/>
            <person name="Bouck J."/>
            <person name="Brokstein P."/>
            <person name="Brottier P."/>
            <person name="Burtis K.C."/>
            <person name="Busam D.A."/>
            <person name="Butler H."/>
            <person name="Cadieu E."/>
            <person name="Center A."/>
            <person name="Chandra I."/>
            <person name="Cherry J.M."/>
            <person name="Cawley S."/>
            <person name="Dahlke C."/>
            <person name="Davenport L.B."/>
            <person name="Davies P."/>
            <person name="de Pablos B."/>
            <person name="Delcher A."/>
            <person name="Deng Z."/>
            <person name="Mays A.D."/>
            <person name="Dew I."/>
            <person name="Dietz S.M."/>
            <person name="Dodson K."/>
            <person name="Doup L.E."/>
            <person name="Downes M."/>
            <person name="Dugan-Rocha S."/>
            <person name="Dunkov B.C."/>
            <person name="Dunn P."/>
            <person name="Durbin K.J."/>
            <person name="Evangelista C.C."/>
            <person name="Ferraz C."/>
            <person name="Ferriera S."/>
            <person name="Fleischmann W."/>
            <person name="Fosler C."/>
            <person name="Gabrielian A.E."/>
            <person name="Garg N.S."/>
            <person name="Gelbart W.M."/>
            <person name="Glasser K."/>
            <person name="Glodek A."/>
            <person name="Gong F."/>
            <person name="Gorrell J.H."/>
            <person name="Gu Z."/>
            <person name="Guan P."/>
            <person name="Harris M."/>
            <person name="Harris N.L."/>
            <person name="Harvey D.A."/>
            <person name="Heiman T.J."/>
            <person name="Hernandez J.R."/>
            <person name="Houck J."/>
            <person name="Hostin D."/>
            <person name="Houston K.A."/>
            <person name="Howland T.J."/>
            <person name="Wei M.-H."/>
            <person name="Ibegwam C."/>
            <person name="Jalali M."/>
            <person name="Kalush F."/>
            <person name="Karpen G.H."/>
            <person name="Ke Z."/>
            <person name="Kennison J.A."/>
            <person name="Ketchum K.A."/>
            <person name="Kimmel B.E."/>
            <person name="Kodira C.D."/>
            <person name="Kraft C.L."/>
            <person name="Kravitz S."/>
            <person name="Kulp D."/>
            <person name="Lai Z."/>
            <person name="Lasko P."/>
            <person name="Lei Y."/>
            <person name="Levitsky A.A."/>
            <person name="Li J.H."/>
            <person name="Li Z."/>
            <person name="Liang Y."/>
            <person name="Lin X."/>
            <person name="Liu X."/>
            <person name="Mattei B."/>
            <person name="McIntosh T.C."/>
            <person name="McLeod M.P."/>
            <person name="McPherson D."/>
            <person name="Merkulov G."/>
            <person name="Milshina N.V."/>
            <person name="Mobarry C."/>
            <person name="Morris J."/>
            <person name="Moshrefi A."/>
            <person name="Mount S.M."/>
            <person name="Moy M."/>
            <person name="Murphy B."/>
            <person name="Murphy L."/>
            <person name="Muzny D.M."/>
            <person name="Nelson D.L."/>
            <person name="Nelson D.R."/>
            <person name="Nelson K.A."/>
            <person name="Nixon K."/>
            <person name="Nusskern D.R."/>
            <person name="Pacleb J.M."/>
            <person name="Palazzolo M."/>
            <person name="Pittman G.S."/>
            <person name="Pan S."/>
            <person name="Pollard J."/>
            <person name="Puri V."/>
            <person name="Reese M.G."/>
            <person name="Reinert K."/>
            <person name="Remington K."/>
            <person name="Saunders R.D.C."/>
            <person name="Scheeler F."/>
            <person name="Shen H."/>
            <person name="Shue B.C."/>
            <person name="Siden-Kiamos I."/>
            <person name="Simpson M."/>
            <person name="Skupski M.P."/>
            <person name="Smith T.J."/>
            <person name="Spier E."/>
            <person name="Spradling A.C."/>
            <person name="Stapleton M."/>
            <person name="Strong R."/>
            <person name="Sun E."/>
            <person name="Svirskas R."/>
            <person name="Tector C."/>
            <person name="Turner R."/>
            <person name="Venter E."/>
            <person name="Wang A.H."/>
            <person name="Wang X."/>
            <person name="Wang Z.-Y."/>
            <person name="Wassarman D.A."/>
            <person name="Weinstock G.M."/>
            <person name="Weissenbach J."/>
            <person name="Williams S.M."/>
            <person name="Woodage T."/>
            <person name="Worley K.C."/>
            <person name="Wu D."/>
            <person name="Yang S."/>
            <person name="Yao Q.A."/>
            <person name="Ye J."/>
            <person name="Yeh R.-F."/>
            <person name="Zaveri J.S."/>
            <person name="Zhan M."/>
            <person name="Zhang G."/>
            <person name="Zhao Q."/>
            <person name="Zheng L."/>
            <person name="Zheng X.H."/>
            <person name="Zhong F.N."/>
            <person name="Zhong W."/>
            <person name="Zhou X."/>
            <person name="Zhu S.C."/>
            <person name="Zhu X."/>
            <person name="Smith H.O."/>
            <person name="Gibbs R.A."/>
            <person name="Myers E.W."/>
            <person name="Rubin G.M."/>
            <person name="Venter J.C."/>
        </authorList>
    </citation>
    <scope>NUCLEOTIDE SEQUENCE [LARGE SCALE GENOMIC DNA]</scope>
    <source>
        <strain>Berkeley</strain>
    </source>
</reference>
<reference key="3">
    <citation type="journal article" date="2002" name="Genome Biol.">
        <title>Annotation of the Drosophila melanogaster euchromatic genome: a systematic review.</title>
        <authorList>
            <person name="Misra S."/>
            <person name="Crosby M.A."/>
            <person name="Mungall C.J."/>
            <person name="Matthews B.B."/>
            <person name="Campbell K.S."/>
            <person name="Hradecky P."/>
            <person name="Huang Y."/>
            <person name="Kaminker J.S."/>
            <person name="Millburn G.H."/>
            <person name="Prochnik S.E."/>
            <person name="Smith C.D."/>
            <person name="Tupy J.L."/>
            <person name="Whitfield E.J."/>
            <person name="Bayraktaroglu L."/>
            <person name="Berman B.P."/>
            <person name="Bettencourt B.R."/>
            <person name="Celniker S.E."/>
            <person name="de Grey A.D.N.J."/>
            <person name="Drysdale R.A."/>
            <person name="Harris N.L."/>
            <person name="Richter J."/>
            <person name="Russo S."/>
            <person name="Schroeder A.J."/>
            <person name="Shu S.Q."/>
            <person name="Stapleton M."/>
            <person name="Yamada C."/>
            <person name="Ashburner M."/>
            <person name="Gelbart W.M."/>
            <person name="Rubin G.M."/>
            <person name="Lewis S.E."/>
        </authorList>
    </citation>
    <scope>GENOME REANNOTATION</scope>
    <source>
        <strain>Berkeley</strain>
    </source>
</reference>
<reference key="4">
    <citation type="journal article" date="2002" name="Curr. Biol.">
        <title>The sister-chromatid cohesion protein ORD is required for chiasma maintenance in Drosophila oocytes.</title>
        <authorList>
            <person name="Bickel S.E."/>
            <person name="Orr-Weaver T.L."/>
            <person name="Balicky E.M."/>
        </authorList>
    </citation>
    <scope>CHARACTERIZATION</scope>
</reference>
<reference key="5">
    <citation type="journal article" date="2002" name="Mol. Biol. Cell">
        <title>Meiotic cohesion requires accumulation of ORD on chromosomes before condensation.</title>
        <authorList>
            <person name="Balicky E.M."/>
            <person name="Endres M.W."/>
            <person name="Lai C."/>
            <person name="Bickel S.E."/>
        </authorList>
    </citation>
    <scope>CHARACTERIZATION</scope>
</reference>
<reference key="6">
    <citation type="journal article" date="2004" name="Chromosoma">
        <title>A proposed role for the Polycomb group protein dRING in meiotic sister-chromatid cohesion.</title>
        <authorList>
            <person name="Balicky E.M."/>
            <person name="Young L."/>
            <person name="Orr-Weaver T.L."/>
            <person name="Bickel S.E."/>
        </authorList>
    </citation>
    <scope>INTERACTION WITH SCE</scope>
</reference>
<feature type="chain" id="PRO_0000058080" description="Protein ORD">
    <location>
        <begin position="1"/>
        <end position="479"/>
    </location>
</feature>
<feature type="region of interest" description="Disordered" evidence="1">
    <location>
        <begin position="102"/>
        <end position="140"/>
    </location>
</feature>
<feature type="compositionally biased region" description="Acidic residues" evidence="1">
    <location>
        <begin position="104"/>
        <end position="116"/>
    </location>
</feature>
<feature type="compositionally biased region" description="Basic and acidic residues" evidence="1">
    <location>
        <begin position="124"/>
        <end position="140"/>
    </location>
</feature>
<feature type="sequence conflict" description="In Ref. 1; CAA63426." evidence="3" ref="1">
    <original>D</original>
    <variation>E</variation>
    <location>
        <position position="444"/>
    </location>
</feature>
<proteinExistence type="evidence at protein level"/>
<name>ORD_DROME</name>
<protein>
    <recommendedName>
        <fullName>Protein ORD</fullName>
    </recommendedName>
    <alternativeName>
        <fullName>Orientation disrupter protein</fullName>
    </alternativeName>
</protein>